<reference key="1">
    <citation type="journal article" date="2008" name="PLoS ONE">
        <title>Genome sequence of the saprophyte Leptospira biflexa provides insights into the evolution of Leptospira and the pathogenesis of leptospirosis.</title>
        <authorList>
            <person name="Picardeau M."/>
            <person name="Bulach D.M."/>
            <person name="Bouchier C."/>
            <person name="Zuerner R.L."/>
            <person name="Zidane N."/>
            <person name="Wilson P.J."/>
            <person name="Creno S."/>
            <person name="Kuczek E.S."/>
            <person name="Bommezzadri S."/>
            <person name="Davis J.C."/>
            <person name="McGrath A."/>
            <person name="Johnson M.J."/>
            <person name="Boursaux-Eude C."/>
            <person name="Seemann T."/>
            <person name="Rouy Z."/>
            <person name="Coppel R.L."/>
            <person name="Rood J.I."/>
            <person name="Lajus A."/>
            <person name="Davies J.K."/>
            <person name="Medigue C."/>
            <person name="Adler B."/>
        </authorList>
    </citation>
    <scope>NUCLEOTIDE SEQUENCE [LARGE SCALE GENOMIC DNA]</scope>
    <source>
        <strain>Patoc 1 / ATCC 23582 / Paris</strain>
    </source>
</reference>
<feature type="chain" id="PRO_1000097963" description="ATP-dependent Clp protease ATP-binding subunit ClpX">
    <location>
        <begin position="1"/>
        <end position="426"/>
    </location>
</feature>
<feature type="domain" description="ClpX-type ZB" evidence="2">
    <location>
        <begin position="5"/>
        <end position="58"/>
    </location>
</feature>
<feature type="binding site" evidence="2">
    <location>
        <position position="17"/>
    </location>
    <ligand>
        <name>Zn(2+)</name>
        <dbReference type="ChEBI" id="CHEBI:29105"/>
    </ligand>
</feature>
<feature type="binding site" evidence="2">
    <location>
        <position position="20"/>
    </location>
    <ligand>
        <name>Zn(2+)</name>
        <dbReference type="ChEBI" id="CHEBI:29105"/>
    </ligand>
</feature>
<feature type="binding site" evidence="2">
    <location>
        <position position="39"/>
    </location>
    <ligand>
        <name>Zn(2+)</name>
        <dbReference type="ChEBI" id="CHEBI:29105"/>
    </ligand>
</feature>
<feature type="binding site" evidence="2">
    <location>
        <position position="42"/>
    </location>
    <ligand>
        <name>Zn(2+)</name>
        <dbReference type="ChEBI" id="CHEBI:29105"/>
    </ligand>
</feature>
<feature type="binding site" evidence="1">
    <location>
        <begin position="123"/>
        <end position="130"/>
    </location>
    <ligand>
        <name>ATP</name>
        <dbReference type="ChEBI" id="CHEBI:30616"/>
    </ligand>
</feature>
<comment type="function">
    <text evidence="1">ATP-dependent specificity component of the Clp protease. It directs the protease to specific substrates. Can perform chaperone functions in the absence of ClpP.</text>
</comment>
<comment type="subunit">
    <text evidence="1">Component of the ClpX-ClpP complex. Forms a hexameric ring that, in the presence of ATP, binds to fourteen ClpP subunits assembled into a disk-like structure with a central cavity, resembling the structure of eukaryotic proteasomes.</text>
</comment>
<comment type="similarity">
    <text evidence="1">Belongs to the ClpX chaperone family.</text>
</comment>
<protein>
    <recommendedName>
        <fullName evidence="1">ATP-dependent Clp protease ATP-binding subunit ClpX</fullName>
    </recommendedName>
</protein>
<organism>
    <name type="scientific">Leptospira biflexa serovar Patoc (strain Patoc 1 / ATCC 23582 / Paris)</name>
    <dbReference type="NCBI Taxonomy" id="456481"/>
    <lineage>
        <taxon>Bacteria</taxon>
        <taxon>Pseudomonadati</taxon>
        <taxon>Spirochaetota</taxon>
        <taxon>Spirochaetia</taxon>
        <taxon>Leptospirales</taxon>
        <taxon>Leptospiraceae</taxon>
        <taxon>Leptospira</taxon>
    </lineage>
</organism>
<evidence type="ECO:0000255" key="1">
    <source>
        <dbReference type="HAMAP-Rule" id="MF_00175"/>
    </source>
</evidence>
<evidence type="ECO:0000255" key="2">
    <source>
        <dbReference type="PROSITE-ProRule" id="PRU01250"/>
    </source>
</evidence>
<proteinExistence type="inferred from homology"/>
<accession>B0SMF0</accession>
<dbReference type="EMBL" id="CP000786">
    <property type="protein sequence ID" value="ABZ97094.1"/>
    <property type="molecule type" value="Genomic_DNA"/>
</dbReference>
<dbReference type="RefSeq" id="WP_012387976.1">
    <property type="nucleotide sequence ID" value="NC_010602.1"/>
</dbReference>
<dbReference type="SMR" id="B0SMF0"/>
<dbReference type="STRING" id="456481.LEPBI_I0970"/>
<dbReference type="KEGG" id="lbi:LEPBI_I0970"/>
<dbReference type="HOGENOM" id="CLU_014218_8_2_12"/>
<dbReference type="OrthoDB" id="9804062at2"/>
<dbReference type="BioCyc" id="LBIF456481:LEPBI_RS04765-MONOMER"/>
<dbReference type="Proteomes" id="UP000001847">
    <property type="component" value="Chromosome I"/>
</dbReference>
<dbReference type="GO" id="GO:0009376">
    <property type="term" value="C:HslUV protease complex"/>
    <property type="evidence" value="ECO:0007669"/>
    <property type="project" value="TreeGrafter"/>
</dbReference>
<dbReference type="GO" id="GO:0005524">
    <property type="term" value="F:ATP binding"/>
    <property type="evidence" value="ECO:0007669"/>
    <property type="project" value="UniProtKB-UniRule"/>
</dbReference>
<dbReference type="GO" id="GO:0016887">
    <property type="term" value="F:ATP hydrolysis activity"/>
    <property type="evidence" value="ECO:0007669"/>
    <property type="project" value="InterPro"/>
</dbReference>
<dbReference type="GO" id="GO:0140662">
    <property type="term" value="F:ATP-dependent protein folding chaperone"/>
    <property type="evidence" value="ECO:0007669"/>
    <property type="project" value="InterPro"/>
</dbReference>
<dbReference type="GO" id="GO:0046983">
    <property type="term" value="F:protein dimerization activity"/>
    <property type="evidence" value="ECO:0007669"/>
    <property type="project" value="InterPro"/>
</dbReference>
<dbReference type="GO" id="GO:0051082">
    <property type="term" value="F:unfolded protein binding"/>
    <property type="evidence" value="ECO:0007669"/>
    <property type="project" value="UniProtKB-UniRule"/>
</dbReference>
<dbReference type="GO" id="GO:0008270">
    <property type="term" value="F:zinc ion binding"/>
    <property type="evidence" value="ECO:0007669"/>
    <property type="project" value="InterPro"/>
</dbReference>
<dbReference type="GO" id="GO:0051301">
    <property type="term" value="P:cell division"/>
    <property type="evidence" value="ECO:0007669"/>
    <property type="project" value="TreeGrafter"/>
</dbReference>
<dbReference type="GO" id="GO:0051603">
    <property type="term" value="P:proteolysis involved in protein catabolic process"/>
    <property type="evidence" value="ECO:0007669"/>
    <property type="project" value="TreeGrafter"/>
</dbReference>
<dbReference type="CDD" id="cd19497">
    <property type="entry name" value="RecA-like_ClpX"/>
    <property type="match status" value="1"/>
</dbReference>
<dbReference type="FunFam" id="1.10.8.60:FF:000002">
    <property type="entry name" value="ATP-dependent Clp protease ATP-binding subunit ClpX"/>
    <property type="match status" value="1"/>
</dbReference>
<dbReference type="FunFam" id="3.40.50.300:FF:000005">
    <property type="entry name" value="ATP-dependent Clp protease ATP-binding subunit ClpX"/>
    <property type="match status" value="1"/>
</dbReference>
<dbReference type="Gene3D" id="1.10.8.60">
    <property type="match status" value="1"/>
</dbReference>
<dbReference type="Gene3D" id="6.20.220.10">
    <property type="entry name" value="ClpX chaperone, C4-type zinc finger domain"/>
    <property type="match status" value="1"/>
</dbReference>
<dbReference type="Gene3D" id="3.40.50.300">
    <property type="entry name" value="P-loop containing nucleotide triphosphate hydrolases"/>
    <property type="match status" value="1"/>
</dbReference>
<dbReference type="HAMAP" id="MF_00175">
    <property type="entry name" value="ClpX"/>
    <property type="match status" value="1"/>
</dbReference>
<dbReference type="InterPro" id="IPR003593">
    <property type="entry name" value="AAA+_ATPase"/>
</dbReference>
<dbReference type="InterPro" id="IPR050052">
    <property type="entry name" value="ATP-dep_Clp_protease_ClpX"/>
</dbReference>
<dbReference type="InterPro" id="IPR003959">
    <property type="entry name" value="ATPase_AAA_core"/>
</dbReference>
<dbReference type="InterPro" id="IPR019489">
    <property type="entry name" value="Clp_ATPase_C"/>
</dbReference>
<dbReference type="InterPro" id="IPR004487">
    <property type="entry name" value="Clp_protease_ATP-bd_su_ClpX"/>
</dbReference>
<dbReference type="InterPro" id="IPR046425">
    <property type="entry name" value="ClpX_bact"/>
</dbReference>
<dbReference type="InterPro" id="IPR027417">
    <property type="entry name" value="P-loop_NTPase"/>
</dbReference>
<dbReference type="InterPro" id="IPR010603">
    <property type="entry name" value="Znf_CppX_C4"/>
</dbReference>
<dbReference type="InterPro" id="IPR038366">
    <property type="entry name" value="Znf_CppX_C4_sf"/>
</dbReference>
<dbReference type="NCBIfam" id="TIGR00382">
    <property type="entry name" value="clpX"/>
    <property type="match status" value="1"/>
</dbReference>
<dbReference type="NCBIfam" id="NF003745">
    <property type="entry name" value="PRK05342.1"/>
    <property type="match status" value="1"/>
</dbReference>
<dbReference type="PANTHER" id="PTHR48102:SF7">
    <property type="entry name" value="ATP-DEPENDENT CLP PROTEASE ATP-BINDING SUBUNIT CLPX-LIKE, MITOCHONDRIAL"/>
    <property type="match status" value="1"/>
</dbReference>
<dbReference type="PANTHER" id="PTHR48102">
    <property type="entry name" value="ATP-DEPENDENT CLP PROTEASE ATP-BINDING SUBUNIT CLPX-LIKE, MITOCHONDRIAL-RELATED"/>
    <property type="match status" value="1"/>
</dbReference>
<dbReference type="Pfam" id="PF07724">
    <property type="entry name" value="AAA_2"/>
    <property type="match status" value="1"/>
</dbReference>
<dbReference type="Pfam" id="PF10431">
    <property type="entry name" value="ClpB_D2-small"/>
    <property type="match status" value="1"/>
</dbReference>
<dbReference type="Pfam" id="PF06689">
    <property type="entry name" value="zf-C4_ClpX"/>
    <property type="match status" value="1"/>
</dbReference>
<dbReference type="SMART" id="SM00382">
    <property type="entry name" value="AAA"/>
    <property type="match status" value="1"/>
</dbReference>
<dbReference type="SMART" id="SM01086">
    <property type="entry name" value="ClpB_D2-small"/>
    <property type="match status" value="1"/>
</dbReference>
<dbReference type="SMART" id="SM00994">
    <property type="entry name" value="zf-C4_ClpX"/>
    <property type="match status" value="1"/>
</dbReference>
<dbReference type="SUPFAM" id="SSF57716">
    <property type="entry name" value="Glucocorticoid receptor-like (DNA-binding domain)"/>
    <property type="match status" value="1"/>
</dbReference>
<dbReference type="SUPFAM" id="SSF52540">
    <property type="entry name" value="P-loop containing nucleoside triphosphate hydrolases"/>
    <property type="match status" value="1"/>
</dbReference>
<dbReference type="PROSITE" id="PS51902">
    <property type="entry name" value="CLPX_ZB"/>
    <property type="match status" value="1"/>
</dbReference>
<keyword id="KW-0067">ATP-binding</keyword>
<keyword id="KW-0143">Chaperone</keyword>
<keyword id="KW-0479">Metal-binding</keyword>
<keyword id="KW-0547">Nucleotide-binding</keyword>
<keyword id="KW-1185">Reference proteome</keyword>
<keyword id="KW-0862">Zinc</keyword>
<gene>
    <name evidence="1" type="primary">clpX</name>
    <name type="ordered locus">LEPBI_I0970</name>
</gene>
<name>CLPX_LEPBP</name>
<sequence length="426" mass="47066">MTKRASQTGNSREKLHCSFCGKAQDEVRRLVAGPGVYICDECISLCNEIIAEEPQSGEKTAIVGDIPKPTEIKKILDQYVIGQEQAKKALAVAVYNHYKRIFHNERKAGDVELEKSNIMLIGPTGSGKTLLAQTLARILKVPFAIVDATALTEAGYVGEDVENIILKLIQNADNDVKRAEMGIIYIDEIDKISRKSDSASITRDVSGEGVQQALLKIIEGTVANVPPQGGRKHPHQEYIPVETKNILFICGGAFVGLTDIIKQRVGVKSIGFHSNEVVNDRGRKIEEGESLVHHVIPDDLMKFGLIPEFIGRLPIIATLDELTIESLKSIFTEPKNSLLKQYQKMFDIENVKLKFTESAIEAIAQTAIKRESGARGLRAIVEEIMMELMFQIPSRKDVLEVVVTDDTVLKKEAPITILKGDIEKIA</sequence>